<reference key="1">
    <citation type="journal article" date="2002" name="Nucleic Acids Res.">
        <title>Genome sequence of Shigella flexneri 2a: insights into pathogenicity through comparison with genomes of Escherichia coli K12 and O157.</title>
        <authorList>
            <person name="Jin Q."/>
            <person name="Yuan Z."/>
            <person name="Xu J."/>
            <person name="Wang Y."/>
            <person name="Shen Y."/>
            <person name="Lu W."/>
            <person name="Wang J."/>
            <person name="Liu H."/>
            <person name="Yang J."/>
            <person name="Yang F."/>
            <person name="Zhang X."/>
            <person name="Zhang J."/>
            <person name="Yang G."/>
            <person name="Wu H."/>
            <person name="Qu D."/>
            <person name="Dong J."/>
            <person name="Sun L."/>
            <person name="Xue Y."/>
            <person name="Zhao A."/>
            <person name="Gao Y."/>
            <person name="Zhu J."/>
            <person name="Kan B."/>
            <person name="Ding K."/>
            <person name="Chen S."/>
            <person name="Cheng H."/>
            <person name="Yao Z."/>
            <person name="He B."/>
            <person name="Chen R."/>
            <person name="Ma D."/>
            <person name="Qiang B."/>
            <person name="Wen Y."/>
            <person name="Hou Y."/>
            <person name="Yu J."/>
        </authorList>
    </citation>
    <scope>NUCLEOTIDE SEQUENCE [LARGE SCALE GENOMIC DNA]</scope>
    <source>
        <strain>301 / Serotype 2a</strain>
    </source>
</reference>
<reference key="2">
    <citation type="journal article" date="2003" name="Infect. Immun.">
        <title>Complete genome sequence and comparative genomics of Shigella flexneri serotype 2a strain 2457T.</title>
        <authorList>
            <person name="Wei J."/>
            <person name="Goldberg M.B."/>
            <person name="Burland V."/>
            <person name="Venkatesan M.M."/>
            <person name="Deng W."/>
            <person name="Fournier G."/>
            <person name="Mayhew G.F."/>
            <person name="Plunkett G. III"/>
            <person name="Rose D.J."/>
            <person name="Darling A."/>
            <person name="Mau B."/>
            <person name="Perna N.T."/>
            <person name="Payne S.M."/>
            <person name="Runyen-Janecky L.J."/>
            <person name="Zhou S."/>
            <person name="Schwartz D.C."/>
            <person name="Blattner F.R."/>
        </authorList>
    </citation>
    <scope>NUCLEOTIDE SEQUENCE [LARGE SCALE GENOMIC DNA]</scope>
    <source>
        <strain>ATCC 700930 / 2457T / Serotype 2a</strain>
    </source>
</reference>
<accession>P0ACE2</accession>
<accession>P37181</accession>
<name>MBHM_SHIFL</name>
<feature type="initiator methionine" description="Removed" evidence="1">
    <location>
        <position position="1"/>
    </location>
</feature>
<feature type="chain" id="PRO_0000042992" description="Hydrogenase-2 large chain">
    <location>
        <begin position="2"/>
        <end position="552"/>
    </location>
</feature>
<feature type="propeptide" id="PRO_0000042993">
    <location>
        <begin position="553"/>
        <end position="567"/>
    </location>
</feature>
<feature type="binding site" evidence="2">
    <location>
        <position position="61"/>
    </location>
    <ligand>
        <name>Ni(2+)</name>
        <dbReference type="ChEBI" id="CHEBI:49786"/>
    </ligand>
</feature>
<feature type="binding site" evidence="2">
    <location>
        <position position="64"/>
    </location>
    <ligand>
        <name>Ni(2+)</name>
        <dbReference type="ChEBI" id="CHEBI:49786"/>
    </ligand>
</feature>
<feature type="binding site" evidence="2">
    <location>
        <position position="546"/>
    </location>
    <ligand>
        <name>Ni(2+)</name>
        <dbReference type="ChEBI" id="CHEBI:49786"/>
    </ligand>
</feature>
<feature type="binding site" evidence="2">
    <location>
        <position position="549"/>
    </location>
    <ligand>
        <name>Ni(2+)</name>
        <dbReference type="ChEBI" id="CHEBI:49786"/>
    </ligand>
</feature>
<feature type="site" description="Cleavage; by HybD" evidence="1">
    <location>
        <begin position="552"/>
        <end position="553"/>
    </location>
</feature>
<evidence type="ECO:0000250" key="1"/>
<evidence type="ECO:0000255" key="2"/>
<evidence type="ECO:0000305" key="3"/>
<gene>
    <name type="primary">hybC</name>
    <name type="ordered locus">SF3041</name>
    <name type="ordered locus">S3242</name>
</gene>
<sequence>MSQRITIDPVTRIEGHLRIDCEIENGVVSKAWASGTMWRGMEEIVKNRDPRDAWMIVQRICGVCTTTHALSSVRAAESALNIDVPVNAQYIRNIILAAHTTHDHIVHFYQLSALDWVDITSALQADPTKASEMLKGVSTWHLNSPEEFTKVQNKIKDLVASGQLGIFANGYWGHPAMKLPPEVNLIAVAHYLQALECQRDANRVVALLGGKTPHIQNLAVGGVANPINLDGLGVLNLERLMYIKSFIDKLSDFVEQVYKVDTAVIAAFYPEWLTRGKGAVNYLSVPEFPTDSKNGSFLFPGGYIENADLSSYRPITSHSDEYLIKGIQESAKHSWYKDEAPQAPWEGTTIPAYDGWSDDGKYSWVKSPTFYGKTVEVGPLANMLVKLAAGRESTQNKLNEIVAIYQKLTGNTLEVAQLHSTLGRIIGRTVHCCELQDILQNQYSALITNIGKGDHTTFVKPNIPATGEFKGVGFLEAPRGMLSHWMVIKDGIISNYQAVVPSTWNSGPRNFNDDVGPYEQSLVGTPVADPNKPLEVVRTIHSFDPCMACAVHVVDADGNEVVSVKVL</sequence>
<comment type="function">
    <text evidence="1">This is one of three E.coli hydrogenases synthesized in response to different physiological conditions. HYD2 is involved in hydrogen uptake (By similarity).</text>
</comment>
<comment type="catalytic activity">
    <reaction>
        <text>H2 + A = AH2</text>
        <dbReference type="Rhea" id="RHEA:12116"/>
        <dbReference type="ChEBI" id="CHEBI:13193"/>
        <dbReference type="ChEBI" id="CHEBI:17499"/>
        <dbReference type="ChEBI" id="CHEBI:18276"/>
        <dbReference type="EC" id="1.12.99.6"/>
    </reaction>
</comment>
<comment type="cofactor">
    <cofactor evidence="1">
        <name>Ni(2+)</name>
        <dbReference type="ChEBI" id="CHEBI:49786"/>
    </cofactor>
    <text evidence="1">Binds 1 nickel ion per subunit.</text>
</comment>
<comment type="subunit">
    <text evidence="1">Heterodimer of a large and a small subunit.</text>
</comment>
<comment type="subcellular location">
    <subcellularLocation>
        <location evidence="1">Cell membrane</location>
        <topology evidence="1">Peripheral membrane protein</topology>
    </subcellularLocation>
</comment>
<comment type="similarity">
    <text evidence="3">Belongs to the [NiFe]/[NiFeSe] hydrogenase large subunit family.</text>
</comment>
<dbReference type="EC" id="1.12.99.6"/>
<dbReference type="EMBL" id="AE005674">
    <property type="protein sequence ID" value="AAN44519.1"/>
    <property type="molecule type" value="Genomic_DNA"/>
</dbReference>
<dbReference type="EMBL" id="AE014073">
    <property type="protein sequence ID" value="AAP18330.1"/>
    <property type="molecule type" value="Genomic_DNA"/>
</dbReference>
<dbReference type="RefSeq" id="NP_708812.1">
    <property type="nucleotide sequence ID" value="NC_004337.2"/>
</dbReference>
<dbReference type="RefSeq" id="WP_000083065.1">
    <property type="nucleotide sequence ID" value="NZ_WPGW01000034.1"/>
</dbReference>
<dbReference type="SMR" id="P0ACE2"/>
<dbReference type="STRING" id="198214.SF3041"/>
<dbReference type="PaxDb" id="198214-SF3041"/>
<dbReference type="GeneID" id="1026601"/>
<dbReference type="GeneID" id="75203605"/>
<dbReference type="KEGG" id="sfl:SF3041"/>
<dbReference type="KEGG" id="sfx:S3242"/>
<dbReference type="PATRIC" id="fig|198214.7.peg.3615"/>
<dbReference type="HOGENOM" id="CLU_030087_0_0_6"/>
<dbReference type="Proteomes" id="UP000001006">
    <property type="component" value="Chromosome"/>
</dbReference>
<dbReference type="Proteomes" id="UP000002673">
    <property type="component" value="Chromosome"/>
</dbReference>
<dbReference type="GO" id="GO:0005886">
    <property type="term" value="C:plasma membrane"/>
    <property type="evidence" value="ECO:0007669"/>
    <property type="project" value="UniProtKB-SubCell"/>
</dbReference>
<dbReference type="GO" id="GO:0008901">
    <property type="term" value="F:ferredoxin hydrogenase activity"/>
    <property type="evidence" value="ECO:0007669"/>
    <property type="project" value="InterPro"/>
</dbReference>
<dbReference type="GO" id="GO:0033748">
    <property type="term" value="F:hydrogenase (acceptor) activity"/>
    <property type="evidence" value="ECO:0007669"/>
    <property type="project" value="UniProtKB-EC"/>
</dbReference>
<dbReference type="GO" id="GO:0016151">
    <property type="term" value="F:nickel cation binding"/>
    <property type="evidence" value="ECO:0007669"/>
    <property type="project" value="InterPro"/>
</dbReference>
<dbReference type="FunFam" id="1.10.645.10:FF:000002">
    <property type="entry name" value="Hydrogenase 2 large subunit"/>
    <property type="match status" value="1"/>
</dbReference>
<dbReference type="Gene3D" id="1.10.645.10">
    <property type="entry name" value="Cytochrome-c3 Hydrogenase, chain B"/>
    <property type="match status" value="1"/>
</dbReference>
<dbReference type="InterPro" id="IPR001501">
    <property type="entry name" value="Ni-dep_hyd_lsu"/>
</dbReference>
<dbReference type="InterPro" id="IPR018194">
    <property type="entry name" value="Ni-dep_hyd_lsu_Ni_BS"/>
</dbReference>
<dbReference type="InterPro" id="IPR029014">
    <property type="entry name" value="NiFe-Hase_large"/>
</dbReference>
<dbReference type="InterPro" id="IPR050867">
    <property type="entry name" value="NiFe/NiFeSe_hydrgnase_LSU"/>
</dbReference>
<dbReference type="NCBIfam" id="NF007778">
    <property type="entry name" value="PRK10467.1"/>
    <property type="match status" value="1"/>
</dbReference>
<dbReference type="PANTHER" id="PTHR42958">
    <property type="entry name" value="HYDROGENASE-2 LARGE CHAIN"/>
    <property type="match status" value="1"/>
</dbReference>
<dbReference type="PANTHER" id="PTHR42958:SF1">
    <property type="entry name" value="HYDROGENASE-2 LARGE CHAIN"/>
    <property type="match status" value="1"/>
</dbReference>
<dbReference type="Pfam" id="PF00374">
    <property type="entry name" value="NiFeSe_Hases"/>
    <property type="match status" value="1"/>
</dbReference>
<dbReference type="SUPFAM" id="SSF56762">
    <property type="entry name" value="HydB/Nqo4-like"/>
    <property type="match status" value="1"/>
</dbReference>
<dbReference type="PROSITE" id="PS00507">
    <property type="entry name" value="NI_HGENASE_L_1"/>
    <property type="match status" value="1"/>
</dbReference>
<dbReference type="PROSITE" id="PS00508">
    <property type="entry name" value="NI_HGENASE_L_2"/>
    <property type="match status" value="1"/>
</dbReference>
<keyword id="KW-1003">Cell membrane</keyword>
<keyword id="KW-0472">Membrane</keyword>
<keyword id="KW-0479">Metal-binding</keyword>
<keyword id="KW-0533">Nickel</keyword>
<keyword id="KW-0560">Oxidoreductase</keyword>
<keyword id="KW-1185">Reference proteome</keyword>
<protein>
    <recommendedName>
        <fullName>Hydrogenase-2 large chain</fullName>
        <shortName>HYD2</shortName>
        <ecNumber>1.12.99.6</ecNumber>
    </recommendedName>
    <alternativeName>
        <fullName>Membrane-bound hydrogenase 2 large subunit</fullName>
    </alternativeName>
    <alternativeName>
        <fullName>NiFe hydrogenase</fullName>
    </alternativeName>
</protein>
<organism>
    <name type="scientific">Shigella flexneri</name>
    <dbReference type="NCBI Taxonomy" id="623"/>
    <lineage>
        <taxon>Bacteria</taxon>
        <taxon>Pseudomonadati</taxon>
        <taxon>Pseudomonadota</taxon>
        <taxon>Gammaproteobacteria</taxon>
        <taxon>Enterobacterales</taxon>
        <taxon>Enterobacteriaceae</taxon>
        <taxon>Shigella</taxon>
    </lineage>
</organism>
<proteinExistence type="inferred from homology"/>